<proteinExistence type="evidence at protein level"/>
<name>FTSY_MYCTU</name>
<comment type="function">
    <text evidence="1 3 4">Involved in targeting and insertion of nascent membrane proteins into the cytoplasmic membrane. Acts as a receptor for the complex formed by the signal recognition particle (SRP) and the ribosome-nascent chain (RNC) (By similarity). Most of the substrate proteins are involved in stress regulation, lipid metabolism, intermediary metabolism, and cell wall processes (PubMed:29361248). Shows GTPase activity (PubMed:29361248, PubMed:33412199). Can also hydrolyze ATP, UTP and CTP (PubMed:33412199).</text>
</comment>
<comment type="catalytic activity">
    <reaction evidence="1 3 4">
        <text>GTP + H2O = GDP + phosphate + H(+)</text>
        <dbReference type="Rhea" id="RHEA:19669"/>
        <dbReference type="ChEBI" id="CHEBI:15377"/>
        <dbReference type="ChEBI" id="CHEBI:15378"/>
        <dbReference type="ChEBI" id="CHEBI:37565"/>
        <dbReference type="ChEBI" id="CHEBI:43474"/>
        <dbReference type="ChEBI" id="CHEBI:58189"/>
        <dbReference type="EC" id="3.6.5.4"/>
    </reaction>
</comment>
<comment type="activity regulation">
    <text evidence="3 4">The SRP-FtsY complex formation results in mutual stimulation of their GTP hydrolysis activity (PubMed:29361248). GTPase activity is stimulated by Mg(2+) or a high concentration of Mn(2+). Increasing Mg(2+) decreases the activity (PubMed:33412199). GDP acts as an inhibitor (PubMed:33412199).</text>
</comment>
<comment type="biophysicochemical properties">
    <kinetics>
        <KM evidence="4">39.95 uM for GTP</KM>
        <KM evidence="4">24.87 uM for ATP</KM>
        <Vmax evidence="4">20.25 umol/min/mg enzyme</Vmax>
        <Vmax evidence="4">12.23 umol/min/mg enzyme</Vmax>
        <text evidence="4">kcat is 0.012 sec(-1) for GTP hydrolysis (PubMed:33412199). kcat is 0.007 sec(-1) for ATP hydrolysis (PubMed:33412199).</text>
    </kinetics>
    <phDependence>
        <text evidence="4">Optimum pH is 7.5-8.0.</text>
    </phDependence>
    <temperatureDependence>
        <text evidence="4">Optimum temperature is 25-37 degrees Celsius.</text>
    </temperatureDependence>
</comment>
<comment type="subunit">
    <text evidence="1 3">Part of the signal recognition particle protein translocation system, which is composed of SRP and FtsY.</text>
</comment>
<comment type="subcellular location">
    <subcellularLocation>
        <location evidence="1">Cell membrane</location>
        <topology evidence="1">Peripheral membrane protein</topology>
        <orientation evidence="1">Cytoplasmic side</orientation>
    </subcellularLocation>
    <subcellularLocation>
        <location evidence="1">Cytoplasm</location>
    </subcellularLocation>
</comment>
<comment type="disruption phenotype">
    <text evidence="3">Depletion of ffh (SRP) and ftsY results in differential expression of 14 proteins.</text>
</comment>
<comment type="similarity">
    <text evidence="1">Belongs to the GTP-binding SRP family. FtsY subfamily.</text>
</comment>
<feature type="chain" id="PRO_0000101139" description="Signal recognition particle receptor FtsY">
    <location>
        <begin position="1"/>
        <end position="422"/>
    </location>
</feature>
<feature type="region of interest" description="Disordered" evidence="2">
    <location>
        <begin position="39"/>
        <end position="86"/>
    </location>
</feature>
<feature type="compositionally biased region" description="Polar residues" evidence="2">
    <location>
        <begin position="50"/>
        <end position="66"/>
    </location>
</feature>
<feature type="binding site" evidence="1">
    <location>
        <begin position="230"/>
        <end position="237"/>
    </location>
    <ligand>
        <name>GTP</name>
        <dbReference type="ChEBI" id="CHEBI:37565"/>
    </ligand>
</feature>
<feature type="binding site" evidence="1">
    <location>
        <begin position="312"/>
        <end position="316"/>
    </location>
    <ligand>
        <name>GTP</name>
        <dbReference type="ChEBI" id="CHEBI:37565"/>
    </ligand>
</feature>
<feature type="binding site" evidence="1">
    <location>
        <begin position="374"/>
        <end position="377"/>
    </location>
    <ligand>
        <name>GTP</name>
        <dbReference type="ChEBI" id="CHEBI:37565"/>
    </ligand>
</feature>
<feature type="mutagenesis site" description="Severely affects the affinity toward GTP and causes a significant decrease in enzyme activity." evidence="4">
    <original>K</original>
    <variation>A</variation>
    <location>
        <position position="236"/>
    </location>
</feature>
<feature type="mutagenesis site" description="Severely affects the affinity toward GTP and causes a significant decrease in enzyme activity." evidence="4">
    <original>D</original>
    <variation>A</variation>
    <location>
        <position position="367"/>
    </location>
</feature>
<gene>
    <name evidence="1" type="primary">ftsY</name>
    <name type="ordered locus">Rv2921c</name>
    <name type="ORF">MTCY338.10c</name>
</gene>
<reference key="1">
    <citation type="journal article" date="1998" name="Nature">
        <title>Deciphering the biology of Mycobacterium tuberculosis from the complete genome sequence.</title>
        <authorList>
            <person name="Cole S.T."/>
            <person name="Brosch R."/>
            <person name="Parkhill J."/>
            <person name="Garnier T."/>
            <person name="Churcher C.M."/>
            <person name="Harris D.E."/>
            <person name="Gordon S.V."/>
            <person name="Eiglmeier K."/>
            <person name="Gas S."/>
            <person name="Barry C.E. III"/>
            <person name="Tekaia F."/>
            <person name="Badcock K."/>
            <person name="Basham D."/>
            <person name="Brown D."/>
            <person name="Chillingworth T."/>
            <person name="Connor R."/>
            <person name="Davies R.M."/>
            <person name="Devlin K."/>
            <person name="Feltwell T."/>
            <person name="Gentles S."/>
            <person name="Hamlin N."/>
            <person name="Holroyd S."/>
            <person name="Hornsby T."/>
            <person name="Jagels K."/>
            <person name="Krogh A."/>
            <person name="McLean J."/>
            <person name="Moule S."/>
            <person name="Murphy L.D."/>
            <person name="Oliver S."/>
            <person name="Osborne J."/>
            <person name="Quail M.A."/>
            <person name="Rajandream M.A."/>
            <person name="Rogers J."/>
            <person name="Rutter S."/>
            <person name="Seeger K."/>
            <person name="Skelton S."/>
            <person name="Squares S."/>
            <person name="Squares R."/>
            <person name="Sulston J.E."/>
            <person name="Taylor K."/>
            <person name="Whitehead S."/>
            <person name="Barrell B.G."/>
        </authorList>
    </citation>
    <scope>NUCLEOTIDE SEQUENCE [LARGE SCALE GENOMIC DNA]</scope>
    <source>
        <strain>ATCC 25618 / H37Rv</strain>
    </source>
</reference>
<reference key="2">
    <citation type="journal article" date="2011" name="Mol. Cell. Proteomics">
        <title>Proteogenomic analysis of Mycobacterium tuberculosis by high resolution mass spectrometry.</title>
        <authorList>
            <person name="Kelkar D.S."/>
            <person name="Kumar D."/>
            <person name="Kumar P."/>
            <person name="Balakrishnan L."/>
            <person name="Muthusamy B."/>
            <person name="Yadav A.K."/>
            <person name="Shrivastava P."/>
            <person name="Marimuthu A."/>
            <person name="Anand S."/>
            <person name="Sundaram H."/>
            <person name="Kingsbury R."/>
            <person name="Harsha H.C."/>
            <person name="Nair B."/>
            <person name="Prasad T.S."/>
            <person name="Chauhan D.S."/>
            <person name="Katoch K."/>
            <person name="Katoch V.M."/>
            <person name="Kumar P."/>
            <person name="Chaerkady R."/>
            <person name="Ramachandran S."/>
            <person name="Dash D."/>
            <person name="Pandey A."/>
        </authorList>
    </citation>
    <scope>IDENTIFICATION BY MASS SPECTROMETRY [LARGE SCALE ANALYSIS]</scope>
    <source>
        <strain>ATCC 25618 / H37Rv</strain>
    </source>
</reference>
<reference key="3">
    <citation type="journal article" date="2018" name="Can. J. Microbiol.">
        <title>Characterization of FtsY, its interaction with Ffh, and proteomic identification of their potential substrates in Mycobacterium tuberculosis.</title>
        <authorList>
            <person name="Venkatesan A."/>
            <person name="Palaniyandi K."/>
            <person name="Sharma D."/>
            <person name="Bisht D."/>
            <person name="Narayanan S."/>
        </authorList>
    </citation>
    <scope>FUNCTION</scope>
    <scope>CATALYTIC ACTIVITY</scope>
    <scope>ACTIVITY REGULATION</scope>
    <scope>INTERACTION WITH FFH/SRP</scope>
    <scope>DISRUPTION PHENOTYPE</scope>
    <source>
        <strain>H37Rv</strain>
    </source>
</reference>
<reference key="4">
    <citation type="journal article" date="2021" name="Int. J. Biol. Macromol.">
        <title>Essential biochemical, biophysical and computational inputs on efficient functioning of Mycobacterium tuberculosis H37Rv FtsY.</title>
        <authorList>
            <person name="Shivangi X."/>
            <person name="Ekka M.K."/>
            <person name="Meena L.S."/>
        </authorList>
    </citation>
    <scope>FUNCTION</scope>
    <scope>CATALYTIC ACTIVITY</scope>
    <scope>ACTIVITY REGULATION</scope>
    <scope>BIOPHYSICOCHEMICAL PROPERTIES</scope>
    <scope>MUTAGENESIS OF LYS-236 AND ASP-367</scope>
    <source>
        <strain>H37Rv</strain>
    </source>
</reference>
<sequence>MWEGLWIATAVIAALVVIAALTLGLVLYRRRRISLSPRPERGVVDRSGGYTASSGITFSQTPTTQPAERIDTSGLPAVGDDATVPRDAPKRTIADVHLPEFEPEPQAPEVPEADAIAPPEGRLERLRGRLARSQNALGRGLLGLIGGGDLDEDSWQDVEDTLLVADLGPAATASVVSQLRSRLASGNVRTEADARAVLRDVLINELQPGMDRSIRALPHAGHPSVLLVVGVNGTGKTTTVGKLARVLVADGRRVVLGAADTFRAAAADQLQTWAARVGAAVVRGPEGADPASVAFDAVDKGIAAGADVVLIDTAGRLHTKVGLMDELDKVKRVVTRRASVDEVLLVLDATIGQNGLAQARVFAEVVDISGAVLTKLDGTAKGGIVFRVQQELGVPVKLVGLGEGPDDLAPFEPAAFVDALLG</sequence>
<dbReference type="EC" id="3.6.5.4" evidence="1 3 4"/>
<dbReference type="EMBL" id="AL123456">
    <property type="protein sequence ID" value="CCP45723.1"/>
    <property type="molecule type" value="Genomic_DNA"/>
</dbReference>
<dbReference type="PIR" id="A70748">
    <property type="entry name" value="A70748"/>
</dbReference>
<dbReference type="RefSeq" id="NP_217437.1">
    <property type="nucleotide sequence ID" value="NC_000962.3"/>
</dbReference>
<dbReference type="RefSeq" id="WP_003899541.1">
    <property type="nucleotide sequence ID" value="NZ_NVQJ01000006.1"/>
</dbReference>
<dbReference type="SMR" id="P9WGD9"/>
<dbReference type="FunCoup" id="P9WGD9">
    <property type="interactions" value="250"/>
</dbReference>
<dbReference type="STRING" id="83332.Rv2921c"/>
<dbReference type="PaxDb" id="83332-Rv2921c"/>
<dbReference type="DNASU" id="887205"/>
<dbReference type="GeneID" id="887205"/>
<dbReference type="KEGG" id="mtu:Rv2921c"/>
<dbReference type="KEGG" id="mtv:RVBD_2921c"/>
<dbReference type="TubercuList" id="Rv2921c"/>
<dbReference type="eggNOG" id="COG0552">
    <property type="taxonomic scope" value="Bacteria"/>
</dbReference>
<dbReference type="InParanoid" id="P9WGD9"/>
<dbReference type="OrthoDB" id="9804720at2"/>
<dbReference type="PhylomeDB" id="P9WGD9"/>
<dbReference type="SABIO-RK" id="P9WGD9"/>
<dbReference type="Proteomes" id="UP000001584">
    <property type="component" value="Chromosome"/>
</dbReference>
<dbReference type="GO" id="GO:0005737">
    <property type="term" value="C:cytoplasm"/>
    <property type="evidence" value="ECO:0007669"/>
    <property type="project" value="UniProtKB-SubCell"/>
</dbReference>
<dbReference type="GO" id="GO:0009274">
    <property type="term" value="C:peptidoglycan-based cell wall"/>
    <property type="evidence" value="ECO:0007005"/>
    <property type="project" value="MTBBASE"/>
</dbReference>
<dbReference type="GO" id="GO:0005886">
    <property type="term" value="C:plasma membrane"/>
    <property type="evidence" value="ECO:0007005"/>
    <property type="project" value="MTBBASE"/>
</dbReference>
<dbReference type="GO" id="GO:0016887">
    <property type="term" value="F:ATP hydrolysis activity"/>
    <property type="evidence" value="ECO:0007669"/>
    <property type="project" value="InterPro"/>
</dbReference>
<dbReference type="GO" id="GO:0005525">
    <property type="term" value="F:GTP binding"/>
    <property type="evidence" value="ECO:0007669"/>
    <property type="project" value="UniProtKB-UniRule"/>
</dbReference>
<dbReference type="GO" id="GO:0003924">
    <property type="term" value="F:GTPase activity"/>
    <property type="evidence" value="ECO:0000318"/>
    <property type="project" value="GO_Central"/>
</dbReference>
<dbReference type="GO" id="GO:0005047">
    <property type="term" value="F:signal recognition particle binding"/>
    <property type="evidence" value="ECO:0000318"/>
    <property type="project" value="GO_Central"/>
</dbReference>
<dbReference type="GO" id="GO:0006605">
    <property type="term" value="P:protein targeting"/>
    <property type="evidence" value="ECO:0000318"/>
    <property type="project" value="GO_Central"/>
</dbReference>
<dbReference type="GO" id="GO:0006614">
    <property type="term" value="P:SRP-dependent cotranslational protein targeting to membrane"/>
    <property type="evidence" value="ECO:0007669"/>
    <property type="project" value="InterPro"/>
</dbReference>
<dbReference type="CDD" id="cd17874">
    <property type="entry name" value="FtsY"/>
    <property type="match status" value="1"/>
</dbReference>
<dbReference type="FunFam" id="1.20.120.140:FF:000002">
    <property type="entry name" value="Signal recognition particle receptor FtsY"/>
    <property type="match status" value="1"/>
</dbReference>
<dbReference type="FunFam" id="3.40.50.300:FF:000053">
    <property type="entry name" value="Signal recognition particle receptor FtsY"/>
    <property type="match status" value="1"/>
</dbReference>
<dbReference type="Gene3D" id="3.40.50.300">
    <property type="entry name" value="P-loop containing nucleotide triphosphate hydrolases"/>
    <property type="match status" value="1"/>
</dbReference>
<dbReference type="Gene3D" id="1.20.120.140">
    <property type="entry name" value="Signal recognition particle SRP54, nucleotide-binding domain"/>
    <property type="match status" value="1"/>
</dbReference>
<dbReference type="HAMAP" id="MF_00920">
    <property type="entry name" value="FtsY"/>
    <property type="match status" value="1"/>
</dbReference>
<dbReference type="InterPro" id="IPR003593">
    <property type="entry name" value="AAA+_ATPase"/>
</dbReference>
<dbReference type="InterPro" id="IPR027417">
    <property type="entry name" value="P-loop_NTPase"/>
</dbReference>
<dbReference type="InterPro" id="IPR013822">
    <property type="entry name" value="Signal_recog_particl_SRP54_hlx"/>
</dbReference>
<dbReference type="InterPro" id="IPR004390">
    <property type="entry name" value="SR_rcpt_FtsY"/>
</dbReference>
<dbReference type="InterPro" id="IPR036225">
    <property type="entry name" value="SRP/SRP_N"/>
</dbReference>
<dbReference type="InterPro" id="IPR000897">
    <property type="entry name" value="SRP54_GTPase_dom"/>
</dbReference>
<dbReference type="InterPro" id="IPR042101">
    <property type="entry name" value="SRP54_N_sf"/>
</dbReference>
<dbReference type="NCBIfam" id="TIGR00064">
    <property type="entry name" value="ftsY"/>
    <property type="match status" value="1"/>
</dbReference>
<dbReference type="PANTHER" id="PTHR43134">
    <property type="entry name" value="SIGNAL RECOGNITION PARTICLE RECEPTOR SUBUNIT ALPHA"/>
    <property type="match status" value="1"/>
</dbReference>
<dbReference type="PANTHER" id="PTHR43134:SF1">
    <property type="entry name" value="SIGNAL RECOGNITION PARTICLE RECEPTOR SUBUNIT ALPHA"/>
    <property type="match status" value="1"/>
</dbReference>
<dbReference type="Pfam" id="PF00448">
    <property type="entry name" value="SRP54"/>
    <property type="match status" value="1"/>
</dbReference>
<dbReference type="Pfam" id="PF02881">
    <property type="entry name" value="SRP54_N"/>
    <property type="match status" value="1"/>
</dbReference>
<dbReference type="SMART" id="SM00382">
    <property type="entry name" value="AAA"/>
    <property type="match status" value="1"/>
</dbReference>
<dbReference type="SMART" id="SM00962">
    <property type="entry name" value="SRP54"/>
    <property type="match status" value="1"/>
</dbReference>
<dbReference type="SMART" id="SM00963">
    <property type="entry name" value="SRP54_N"/>
    <property type="match status" value="1"/>
</dbReference>
<dbReference type="SUPFAM" id="SSF47364">
    <property type="entry name" value="Domain of the SRP/SRP receptor G-proteins"/>
    <property type="match status" value="1"/>
</dbReference>
<dbReference type="SUPFAM" id="SSF52540">
    <property type="entry name" value="P-loop containing nucleoside triphosphate hydrolases"/>
    <property type="match status" value="1"/>
</dbReference>
<dbReference type="PROSITE" id="PS00300">
    <property type="entry name" value="SRP54"/>
    <property type="match status" value="1"/>
</dbReference>
<protein>
    <recommendedName>
        <fullName evidence="1">Signal recognition particle receptor FtsY</fullName>
        <shortName evidence="1">SRP receptor</shortName>
        <ecNumber evidence="1 3 4">3.6.5.4</ecNumber>
    </recommendedName>
</protein>
<evidence type="ECO:0000255" key="1">
    <source>
        <dbReference type="HAMAP-Rule" id="MF_00920"/>
    </source>
</evidence>
<evidence type="ECO:0000256" key="2">
    <source>
        <dbReference type="SAM" id="MobiDB-lite"/>
    </source>
</evidence>
<evidence type="ECO:0000269" key="3">
    <source>
    </source>
</evidence>
<evidence type="ECO:0000269" key="4">
    <source>
    </source>
</evidence>
<organism>
    <name type="scientific">Mycobacterium tuberculosis (strain ATCC 25618 / H37Rv)</name>
    <dbReference type="NCBI Taxonomy" id="83332"/>
    <lineage>
        <taxon>Bacteria</taxon>
        <taxon>Bacillati</taxon>
        <taxon>Actinomycetota</taxon>
        <taxon>Actinomycetes</taxon>
        <taxon>Mycobacteriales</taxon>
        <taxon>Mycobacteriaceae</taxon>
        <taxon>Mycobacterium</taxon>
        <taxon>Mycobacterium tuberculosis complex</taxon>
    </lineage>
</organism>
<keyword id="KW-1003">Cell membrane</keyword>
<keyword id="KW-0963">Cytoplasm</keyword>
<keyword id="KW-0342">GTP-binding</keyword>
<keyword id="KW-0378">Hydrolase</keyword>
<keyword id="KW-0472">Membrane</keyword>
<keyword id="KW-0547">Nucleotide-binding</keyword>
<keyword id="KW-0675">Receptor</keyword>
<keyword id="KW-1185">Reference proteome</keyword>
<accession>P9WGD9</accession>
<accession>L0TDS3</accession>
<accession>P66842</accession>
<accession>Q10969</accession>